<reference key="1">
    <citation type="journal article" date="2006" name="PLoS Genet.">
        <title>Genome sequence of Rickettsia bellii illuminates the role of amoebae in gene exchanges between intracellular pathogens.</title>
        <authorList>
            <person name="Ogata H."/>
            <person name="La Scola B."/>
            <person name="Audic S."/>
            <person name="Renesto P."/>
            <person name="Blanc G."/>
            <person name="Robert C."/>
            <person name="Fournier P.-E."/>
            <person name="Claverie J.-M."/>
            <person name="Raoult D."/>
        </authorList>
    </citation>
    <scope>NUCLEOTIDE SEQUENCE [LARGE SCALE GENOMIC DNA]</scope>
    <source>
        <strain>RML369-C</strain>
    </source>
</reference>
<feature type="chain" id="PRO_0000277967" description="DNA-directed RNA polymerase subunit omega">
    <location>
        <begin position="1"/>
        <end position="126"/>
    </location>
</feature>
<keyword id="KW-0240">DNA-directed RNA polymerase</keyword>
<keyword id="KW-0548">Nucleotidyltransferase</keyword>
<keyword id="KW-0804">Transcription</keyword>
<keyword id="KW-0808">Transferase</keyword>
<protein>
    <recommendedName>
        <fullName evidence="1">DNA-directed RNA polymerase subunit omega</fullName>
        <shortName evidence="1">RNAP omega subunit</shortName>
        <ecNumber evidence="1">2.7.7.6</ecNumber>
    </recommendedName>
    <alternativeName>
        <fullName evidence="1">RNA polymerase omega subunit</fullName>
    </alternativeName>
    <alternativeName>
        <fullName evidence="1">Transcriptase subunit omega</fullName>
    </alternativeName>
</protein>
<comment type="function">
    <text evidence="1">Promotes RNA polymerase assembly. Latches the N- and C-terminal regions of the beta' subunit thereby facilitating its interaction with the beta and alpha subunits.</text>
</comment>
<comment type="catalytic activity">
    <reaction evidence="1">
        <text>RNA(n) + a ribonucleoside 5'-triphosphate = RNA(n+1) + diphosphate</text>
        <dbReference type="Rhea" id="RHEA:21248"/>
        <dbReference type="Rhea" id="RHEA-COMP:14527"/>
        <dbReference type="Rhea" id="RHEA-COMP:17342"/>
        <dbReference type="ChEBI" id="CHEBI:33019"/>
        <dbReference type="ChEBI" id="CHEBI:61557"/>
        <dbReference type="ChEBI" id="CHEBI:140395"/>
        <dbReference type="EC" id="2.7.7.6"/>
    </reaction>
</comment>
<comment type="subunit">
    <text evidence="1">The RNAP catalytic core consists of 2 alpha, 1 beta, 1 beta' and 1 omega subunit. When a sigma factor is associated with the core the holoenzyme is formed, which can initiate transcription.</text>
</comment>
<comment type="similarity">
    <text evidence="1">Belongs to the RNA polymerase subunit omega family.</text>
</comment>
<sequence length="126" mass="14772">MARITTEDCSKVIPDRFQLVIYATRYAKLLNYKVETNQSKKEKRDKPPVIALRRIASGKVSVAQLEQDFINSLRTRSRIEPIVEQDESEDLEEKFEYLPEVYIGEDYSDLDDQIFTEETGEDFEDK</sequence>
<evidence type="ECO:0000255" key="1">
    <source>
        <dbReference type="HAMAP-Rule" id="MF_00366"/>
    </source>
</evidence>
<gene>
    <name evidence="1" type="primary">rpoZ</name>
    <name type="ordered locus">RBE_0993</name>
</gene>
<accession>Q1RHU0</accession>
<name>RPOZ_RICBR</name>
<organism>
    <name type="scientific">Rickettsia bellii (strain RML369-C)</name>
    <dbReference type="NCBI Taxonomy" id="336407"/>
    <lineage>
        <taxon>Bacteria</taxon>
        <taxon>Pseudomonadati</taxon>
        <taxon>Pseudomonadota</taxon>
        <taxon>Alphaproteobacteria</taxon>
        <taxon>Rickettsiales</taxon>
        <taxon>Rickettsiaceae</taxon>
        <taxon>Rickettsieae</taxon>
        <taxon>Rickettsia</taxon>
        <taxon>belli group</taxon>
    </lineage>
</organism>
<dbReference type="EC" id="2.7.7.6" evidence="1"/>
<dbReference type="EMBL" id="CP000087">
    <property type="protein sequence ID" value="ABE05074.1"/>
    <property type="molecule type" value="Genomic_DNA"/>
</dbReference>
<dbReference type="RefSeq" id="WP_011477654.1">
    <property type="nucleotide sequence ID" value="NC_007940.1"/>
</dbReference>
<dbReference type="SMR" id="Q1RHU0"/>
<dbReference type="KEGG" id="rbe:RBE_0993"/>
<dbReference type="eggNOG" id="COG1758">
    <property type="taxonomic scope" value="Bacteria"/>
</dbReference>
<dbReference type="HOGENOM" id="CLU_138545_0_0_5"/>
<dbReference type="OrthoDB" id="9796300at2"/>
<dbReference type="Proteomes" id="UP000001951">
    <property type="component" value="Chromosome"/>
</dbReference>
<dbReference type="GO" id="GO:0000428">
    <property type="term" value="C:DNA-directed RNA polymerase complex"/>
    <property type="evidence" value="ECO:0007669"/>
    <property type="project" value="UniProtKB-KW"/>
</dbReference>
<dbReference type="GO" id="GO:0003677">
    <property type="term" value="F:DNA binding"/>
    <property type="evidence" value="ECO:0007669"/>
    <property type="project" value="UniProtKB-UniRule"/>
</dbReference>
<dbReference type="GO" id="GO:0003899">
    <property type="term" value="F:DNA-directed RNA polymerase activity"/>
    <property type="evidence" value="ECO:0007669"/>
    <property type="project" value="UniProtKB-UniRule"/>
</dbReference>
<dbReference type="GO" id="GO:0006351">
    <property type="term" value="P:DNA-templated transcription"/>
    <property type="evidence" value="ECO:0007669"/>
    <property type="project" value="UniProtKB-UniRule"/>
</dbReference>
<dbReference type="Gene3D" id="3.90.940.10">
    <property type="match status" value="1"/>
</dbReference>
<dbReference type="HAMAP" id="MF_00366">
    <property type="entry name" value="RNApol_bact_RpoZ"/>
    <property type="match status" value="1"/>
</dbReference>
<dbReference type="InterPro" id="IPR003716">
    <property type="entry name" value="DNA-dir_RNA_pol_omega"/>
</dbReference>
<dbReference type="InterPro" id="IPR006110">
    <property type="entry name" value="Pol_omega/Rpo6/RPB6"/>
</dbReference>
<dbReference type="InterPro" id="IPR036161">
    <property type="entry name" value="RPB6/omega-like_sf"/>
</dbReference>
<dbReference type="NCBIfam" id="TIGR00690">
    <property type="entry name" value="rpoZ"/>
    <property type="match status" value="1"/>
</dbReference>
<dbReference type="PANTHER" id="PTHR34476">
    <property type="entry name" value="DNA-DIRECTED RNA POLYMERASE SUBUNIT OMEGA"/>
    <property type="match status" value="1"/>
</dbReference>
<dbReference type="PANTHER" id="PTHR34476:SF1">
    <property type="entry name" value="DNA-DIRECTED RNA POLYMERASE SUBUNIT OMEGA"/>
    <property type="match status" value="1"/>
</dbReference>
<dbReference type="Pfam" id="PF01192">
    <property type="entry name" value="RNA_pol_Rpb6"/>
    <property type="match status" value="1"/>
</dbReference>
<dbReference type="SMART" id="SM01409">
    <property type="entry name" value="RNA_pol_Rpb6"/>
    <property type="match status" value="1"/>
</dbReference>
<dbReference type="SUPFAM" id="SSF63562">
    <property type="entry name" value="RPB6/omega subunit-like"/>
    <property type="match status" value="1"/>
</dbReference>
<proteinExistence type="inferred from homology"/>